<organism>
    <name type="scientific">Daucus carota</name>
    <name type="common">Wild carrot</name>
    <dbReference type="NCBI Taxonomy" id="4039"/>
    <lineage>
        <taxon>Eukaryota</taxon>
        <taxon>Viridiplantae</taxon>
        <taxon>Streptophyta</taxon>
        <taxon>Embryophyta</taxon>
        <taxon>Tracheophyta</taxon>
        <taxon>Spermatophyta</taxon>
        <taxon>Magnoliopsida</taxon>
        <taxon>eudicotyledons</taxon>
        <taxon>Gunneridae</taxon>
        <taxon>Pentapetalae</taxon>
        <taxon>asterids</taxon>
        <taxon>campanulids</taxon>
        <taxon>Apiales</taxon>
        <taxon>Apiaceae</taxon>
        <taxon>Apioideae</taxon>
        <taxon>Scandiceae</taxon>
        <taxon>Daucinae</taxon>
        <taxon>Daucus</taxon>
        <taxon>Daucus sect. Daucus</taxon>
    </lineage>
</organism>
<sequence length="163" mass="16979">MASHQDQSYKAGEPKGHAQEKTGQMADTMKDKAQAAKDKASEMAGSARDRTVESKDQTGSYVSDKAGAVKDKTCETAQAAKEKTGGAMQATKEKASEMGESAKETAVAGKEKTGGLMSSAAEQVKGMAQGATEAVKNTFGMAGADEEEKTTTTRVTRSSARTE</sequence>
<keyword id="KW-0677">Repeat</keyword>
<feature type="chain" id="PRO_0000221223" description="Late embryogenesis abundant protein Dc3">
    <location>
        <begin position="1"/>
        <end position="163"/>
    </location>
</feature>
<feature type="repeat" description="1">
    <location>
        <begin position="32"/>
        <end position="42"/>
    </location>
</feature>
<feature type="repeat" description="2">
    <location>
        <begin position="43"/>
        <end position="53"/>
    </location>
</feature>
<feature type="repeat" description="3">
    <location>
        <begin position="65"/>
        <end position="75"/>
    </location>
</feature>
<feature type="repeat" description="4">
    <location>
        <begin position="76"/>
        <end position="86"/>
    </location>
</feature>
<feature type="repeat" description="5">
    <location>
        <begin position="87"/>
        <end position="97"/>
    </location>
</feature>
<feature type="repeat" description="6">
    <location>
        <begin position="103"/>
        <end position="115"/>
    </location>
</feature>
<feature type="region of interest" description="Disordered" evidence="1">
    <location>
        <begin position="1"/>
        <end position="117"/>
    </location>
</feature>
<feature type="region of interest" description="6 X 11 AA approximate repeats">
    <location>
        <begin position="32"/>
        <end position="115"/>
    </location>
</feature>
<feature type="region of interest" description="Disordered" evidence="1">
    <location>
        <begin position="139"/>
        <end position="163"/>
    </location>
</feature>
<feature type="compositionally biased region" description="Basic and acidic residues" evidence="1">
    <location>
        <begin position="28"/>
        <end position="56"/>
    </location>
</feature>
<feature type="compositionally biased region" description="Basic and acidic residues" evidence="1">
    <location>
        <begin position="67"/>
        <end position="84"/>
    </location>
</feature>
<feature type="compositionally biased region" description="Basic and acidic residues" evidence="1">
    <location>
        <begin position="91"/>
        <end position="113"/>
    </location>
</feature>
<feature type="compositionally biased region" description="Low complexity" evidence="1">
    <location>
        <begin position="152"/>
        <end position="163"/>
    </location>
</feature>
<comment type="developmental stage">
    <text evidence="2">Expressed at high levels in embryonic tissue but is undetectable in somatic tissue.</text>
</comment>
<comment type="similarity">
    <text evidence="3">Belongs to the LEA type 4 family.</text>
</comment>
<evidence type="ECO:0000256" key="1">
    <source>
        <dbReference type="SAM" id="MobiDB-lite"/>
    </source>
</evidence>
<evidence type="ECO:0000269" key="2">
    <source ref="2"/>
</evidence>
<evidence type="ECO:0000305" key="3"/>
<reference key="1">
    <citation type="journal article" date="1990" name="Dev. Genet.">
        <title>Molecular analysis of a phylogenetically conserved carrot gene: developmental and environmental regulation.</title>
        <authorList>
            <person name="Seffens W.S."/>
            <person name="Almoguera C."/>
            <person name="Wilde H.D."/>
            <person name="Vonder Haar R.A."/>
            <person name="Thomas T.L."/>
        </authorList>
    </citation>
    <scope>NUCLEOTIDE SEQUENCE</scope>
</reference>
<reference key="2">
    <citation type="journal article" date="1988" name="Planta">
        <title>Gene expression programs in embryogenic carrot cultures.</title>
        <authorList>
            <person name="Wilde H.D."/>
            <person name="Nelson W.S."/>
            <person name="Booij H."/>
            <person name="de Vries S.C."/>
            <person name="Thomas T.L."/>
        </authorList>
    </citation>
    <scope>DEVELOPMENTAL STAGE</scope>
</reference>
<name>LEAD3_DAUCA</name>
<accession>P83442</accession>
<protein>
    <recommendedName>
        <fullName>Late embryogenesis abundant protein Dc3</fullName>
    </recommendedName>
</protein>
<dbReference type="PIR" id="A61044">
    <property type="entry name" value="A61044"/>
</dbReference>
<dbReference type="SMR" id="P83442"/>
<dbReference type="GO" id="GO:0005634">
    <property type="term" value="C:nucleus"/>
    <property type="evidence" value="ECO:0007669"/>
    <property type="project" value="TreeGrafter"/>
</dbReference>
<dbReference type="Gene3D" id="1.20.120.20">
    <property type="entry name" value="Apolipoprotein"/>
    <property type="match status" value="1"/>
</dbReference>
<dbReference type="PANTHER" id="PTHR47372">
    <property type="entry name" value="DAUER UP-REGULATED-RELATED"/>
    <property type="match status" value="1"/>
</dbReference>
<dbReference type="PANTHER" id="PTHR47372:SF11">
    <property type="entry name" value="RE19971P"/>
    <property type="match status" value="1"/>
</dbReference>
<proteinExistence type="evidence at transcript level"/>